<dbReference type="EMBL" id="AB003780">
    <property type="protein sequence ID" value="BAA96095.1"/>
    <property type="molecule type" value="mRNA"/>
</dbReference>
<dbReference type="SMR" id="Q9MBF7"/>
<dbReference type="GO" id="GO:0000786">
    <property type="term" value="C:nucleosome"/>
    <property type="evidence" value="ECO:0007669"/>
    <property type="project" value="UniProtKB-KW"/>
</dbReference>
<dbReference type="GO" id="GO:0005634">
    <property type="term" value="C:nucleus"/>
    <property type="evidence" value="ECO:0007669"/>
    <property type="project" value="UniProtKB-SubCell"/>
</dbReference>
<dbReference type="GO" id="GO:0003677">
    <property type="term" value="F:DNA binding"/>
    <property type="evidence" value="ECO:0007669"/>
    <property type="project" value="UniProtKB-KW"/>
</dbReference>
<dbReference type="GO" id="GO:0046982">
    <property type="term" value="F:protein heterodimerization activity"/>
    <property type="evidence" value="ECO:0007669"/>
    <property type="project" value="InterPro"/>
</dbReference>
<dbReference type="GO" id="GO:0030527">
    <property type="term" value="F:structural constituent of chromatin"/>
    <property type="evidence" value="ECO:0007669"/>
    <property type="project" value="InterPro"/>
</dbReference>
<dbReference type="CDD" id="cd22910">
    <property type="entry name" value="HFD_H2B"/>
    <property type="match status" value="1"/>
</dbReference>
<dbReference type="Gene3D" id="1.10.20.10">
    <property type="entry name" value="Histone, subunit A"/>
    <property type="match status" value="1"/>
</dbReference>
<dbReference type="InterPro" id="IPR009072">
    <property type="entry name" value="Histone-fold"/>
</dbReference>
<dbReference type="InterPro" id="IPR007125">
    <property type="entry name" value="Histone_H2A/H2B/H3"/>
</dbReference>
<dbReference type="InterPro" id="IPR000558">
    <property type="entry name" value="Histone_H2B"/>
</dbReference>
<dbReference type="InterPro" id="IPR006311">
    <property type="entry name" value="TAT_signal"/>
</dbReference>
<dbReference type="PANTHER" id="PTHR23428">
    <property type="entry name" value="HISTONE H2B"/>
    <property type="match status" value="1"/>
</dbReference>
<dbReference type="Pfam" id="PF00125">
    <property type="entry name" value="Histone"/>
    <property type="match status" value="1"/>
</dbReference>
<dbReference type="PRINTS" id="PR00621">
    <property type="entry name" value="HISTONEH2B"/>
</dbReference>
<dbReference type="SMART" id="SM00427">
    <property type="entry name" value="H2B"/>
    <property type="match status" value="1"/>
</dbReference>
<dbReference type="SUPFAM" id="SSF47113">
    <property type="entry name" value="Histone-fold"/>
    <property type="match status" value="1"/>
</dbReference>
<comment type="function">
    <text>Core component of nucleosome. Nucleosomes wrap and compact DNA into chromatin, limiting DNA accessibility to the cellular machineries which require DNA as a template. Histones thereby play a central role in transcription regulation, DNA repair, DNA replication and chromosomal stability. DNA accessibility is regulated via a complex set of post-translational modifications of histones, also called histone code, and nucleosome remodeling.</text>
</comment>
<comment type="subunit">
    <text>The nucleosome is a histone octamer containing two molecules each of H2A, H2B, H3 and H4 assembled in one H3-H4 heterotetramer and two H2A-H2B heterodimers. The octamer wraps approximately 147 bp of DNA.</text>
</comment>
<comment type="subcellular location">
    <subcellularLocation>
        <location evidence="1">Nucleus</location>
    </subcellularLocation>
    <subcellularLocation>
        <location evidence="1">Chromosome</location>
    </subcellularLocation>
</comment>
<comment type="tissue specificity">
    <text evidence="3">Expressed in the generative cell within the bicellular pollen. Not detected in other reproductive or vegetative tissues.</text>
</comment>
<comment type="developmental stage">
    <text evidence="3">Associated with the differentiation of male gametic cells during pollen maturation.</text>
</comment>
<comment type="PTM">
    <text evidence="1">Can be acetylated to form H2BK6ac and H2BK33ac.</text>
</comment>
<comment type="similarity">
    <text evidence="4">Belongs to the histone H2B family.</text>
</comment>
<comment type="caution">
    <text evidence="4">To ensure consistency between histone entries, we follow the 'Brno' nomenclature for histone modifications, with positions referring to those used in the literature for the 'closest' model organism. Due to slight variations in histone sequences between organisms and to the presence of initiator methionine in UniProtKB/Swiss-Prot sequences, the actual positions of modified amino acids in the sequence generally differ. In this entry the following conventions are used: H2BK6ac = acetylated Lys-7; H2BK33ac = acetylated Lys-25.</text>
</comment>
<evidence type="ECO:0000250" key="1"/>
<evidence type="ECO:0000256" key="2">
    <source>
        <dbReference type="SAM" id="MobiDB-lite"/>
    </source>
</evidence>
<evidence type="ECO:0000269" key="3">
    <source>
    </source>
</evidence>
<evidence type="ECO:0000305" key="4"/>
<protein>
    <recommendedName>
        <fullName>Histone H2B.1</fullName>
    </recommendedName>
    <alternativeName>
        <fullName>GH2B</fullName>
    </alternativeName>
</protein>
<organism>
    <name type="scientific">Lilium longiflorum</name>
    <name type="common">Trumpet lily</name>
    <dbReference type="NCBI Taxonomy" id="4690"/>
    <lineage>
        <taxon>Eukaryota</taxon>
        <taxon>Viridiplantae</taxon>
        <taxon>Streptophyta</taxon>
        <taxon>Embryophyta</taxon>
        <taxon>Tracheophyta</taxon>
        <taxon>Spermatophyta</taxon>
        <taxon>Magnoliopsida</taxon>
        <taxon>Liliopsida</taxon>
        <taxon>Liliales</taxon>
        <taxon>Liliaceae</taxon>
        <taxon>Lilium</taxon>
    </lineage>
</organism>
<reference key="1">
    <citation type="journal article" date="2000" name="Chromosoma">
        <title>Unusual core histones specifically expressed in male gametic cells of Lilium longiflorum.</title>
        <authorList>
            <person name="Ueda K."/>
            <person name="Kinoshita Y."/>
            <person name="Xu Z.-J."/>
            <person name="Ide N."/>
            <person name="Ono M."/>
            <person name="Akahori Y."/>
            <person name="Tanaka I."/>
            <person name="Inoue M."/>
        </authorList>
    </citation>
    <scope>NUCLEOTIDE SEQUENCE [MRNA]</scope>
    <scope>PROTEIN SEQUENCE OF 69-77</scope>
    <scope>TISSUE SPECIFICITY</scope>
    <scope>DEVELOPMENTAL STAGE</scope>
</reference>
<name>H2B_LILLO</name>
<keyword id="KW-0007">Acetylation</keyword>
<keyword id="KW-0158">Chromosome</keyword>
<keyword id="KW-0903">Direct protein sequencing</keyword>
<keyword id="KW-0238">DNA-binding</keyword>
<keyword id="KW-0544">Nucleosome core</keyword>
<keyword id="KW-0539">Nucleus</keyword>
<proteinExistence type="evidence at protein level"/>
<feature type="chain" id="PRO_0000240655" description="Histone H2B.1">
    <location>
        <begin position="1"/>
        <end position="158"/>
    </location>
</feature>
<feature type="region of interest" description="Disordered" evidence="2">
    <location>
        <begin position="26"/>
        <end position="45"/>
    </location>
</feature>
<feature type="region of interest" description="Disordered" evidence="2">
    <location>
        <begin position="135"/>
        <end position="158"/>
    </location>
</feature>
<feature type="compositionally biased region" description="Basic and acidic residues" evidence="2">
    <location>
        <begin position="135"/>
        <end position="144"/>
    </location>
</feature>
<feature type="compositionally biased region" description="Basic residues" evidence="2">
    <location>
        <begin position="147"/>
        <end position="158"/>
    </location>
</feature>
<feature type="modified residue" description="N6-acetyllysine" evidence="1">
    <location>
        <position position="7"/>
    </location>
</feature>
<feature type="modified residue" description="N6-acetyllysine" evidence="1">
    <location>
        <position position="25"/>
    </location>
</feature>
<sequence length="158" mass="17249">MPPRRKKKAAAAAAAAAAAAAAAGKAAAGKDGKAGIMTPKKPKKGKKKIPLMKYRVYIRRVLTQVRPELGISSKSMLIMNNFVVHNFQNIAKEASILAQYSKKKTITVKELKAAVKLVLPHQLLEYADRDGDRAVHNFESETSKKNSQGRKRGRGQQT</sequence>
<accession>Q9MBF7</accession>